<name>SDHE_PSEPK</name>
<sequence length="84" mass="10263">MVEQTELNRLFWHSRRGMLELDVLLVPFTQEVYPTLNETDRELYVRLLSCEDQDMFGWFMERTESEDPELQRMVRIILDRVQPK</sequence>
<feature type="chain" id="PRO_0000214414" description="FAD assembly factor SdhE">
    <location>
        <begin position="1"/>
        <end position="84"/>
    </location>
</feature>
<protein>
    <recommendedName>
        <fullName>FAD assembly factor SdhE</fullName>
    </recommendedName>
</protein>
<reference key="1">
    <citation type="journal article" date="2002" name="Environ. Microbiol.">
        <title>Complete genome sequence and comparative analysis of the metabolically versatile Pseudomonas putida KT2440.</title>
        <authorList>
            <person name="Nelson K.E."/>
            <person name="Weinel C."/>
            <person name="Paulsen I.T."/>
            <person name="Dodson R.J."/>
            <person name="Hilbert H."/>
            <person name="Martins dos Santos V.A.P."/>
            <person name="Fouts D.E."/>
            <person name="Gill S.R."/>
            <person name="Pop M."/>
            <person name="Holmes M."/>
            <person name="Brinkac L.M."/>
            <person name="Beanan M.J."/>
            <person name="DeBoy R.T."/>
            <person name="Daugherty S.C."/>
            <person name="Kolonay J.F."/>
            <person name="Madupu R."/>
            <person name="Nelson W.C."/>
            <person name="White O."/>
            <person name="Peterson J.D."/>
            <person name="Khouri H.M."/>
            <person name="Hance I."/>
            <person name="Chris Lee P."/>
            <person name="Holtzapple E.K."/>
            <person name="Scanlan D."/>
            <person name="Tran K."/>
            <person name="Moazzez A."/>
            <person name="Utterback T.R."/>
            <person name="Rizzo M."/>
            <person name="Lee K."/>
            <person name="Kosack D."/>
            <person name="Moestl D."/>
            <person name="Wedler H."/>
            <person name="Lauber J."/>
            <person name="Stjepandic D."/>
            <person name="Hoheisel J."/>
            <person name="Straetz M."/>
            <person name="Heim S."/>
            <person name="Kiewitz C."/>
            <person name="Eisen J.A."/>
            <person name="Timmis K.N."/>
            <person name="Duesterhoeft A."/>
            <person name="Tuemmler B."/>
            <person name="Fraser C.M."/>
        </authorList>
    </citation>
    <scope>NUCLEOTIDE SEQUENCE [LARGE SCALE GENOMIC DNA]</scope>
    <source>
        <strain>ATCC 47054 / DSM 6125 / CFBP 8728 / NCIMB 11950 / KT2440</strain>
    </source>
</reference>
<gene>
    <name type="primary">sdhE</name>
    <name type="ordered locus">PP_1424</name>
</gene>
<comment type="function">
    <text evidence="1">An FAD assembly protein, which accelerates covalent attachment of the cofactor into other proteins. Plays an essential role in the assembly of succinate dehydrogenase (SDH, respiratory complex II), an enzyme complex that is a component of both the tricarboxylic acid cycle and the electron transport chain, and which couples the oxidation of succinate to fumarate with the reduction of ubiquinone (coenzyme Q) to ubiquinol. Required for flavinylation (covalent attachment of FAD) of the flavoprotein subunit SdhA of SDH and other flavinylated proteins as well.</text>
</comment>
<comment type="subcellular location">
    <subcellularLocation>
        <location evidence="1">Cytoplasm</location>
    </subcellularLocation>
</comment>
<comment type="similarity">
    <text evidence="2">Belongs to the SdhE FAD assembly factor family.</text>
</comment>
<evidence type="ECO:0000250" key="1">
    <source>
        <dbReference type="UniProtKB" id="G4V4G2"/>
    </source>
</evidence>
<evidence type="ECO:0000305" key="2"/>
<proteinExistence type="inferred from homology"/>
<keyword id="KW-0143">Chaperone</keyword>
<keyword id="KW-0963">Cytoplasm</keyword>
<keyword id="KW-1185">Reference proteome</keyword>
<accession>Q88MZ4</accession>
<organism>
    <name type="scientific">Pseudomonas putida (strain ATCC 47054 / DSM 6125 / CFBP 8728 / NCIMB 11950 / KT2440)</name>
    <dbReference type="NCBI Taxonomy" id="160488"/>
    <lineage>
        <taxon>Bacteria</taxon>
        <taxon>Pseudomonadati</taxon>
        <taxon>Pseudomonadota</taxon>
        <taxon>Gammaproteobacteria</taxon>
        <taxon>Pseudomonadales</taxon>
        <taxon>Pseudomonadaceae</taxon>
        <taxon>Pseudomonas</taxon>
    </lineage>
</organism>
<dbReference type="EMBL" id="AE015451">
    <property type="protein sequence ID" value="AAN67046.1"/>
    <property type="molecule type" value="Genomic_DNA"/>
</dbReference>
<dbReference type="RefSeq" id="NP_743582.1">
    <property type="nucleotide sequence ID" value="NC_002947.4"/>
</dbReference>
<dbReference type="RefSeq" id="WP_003252043.1">
    <property type="nucleotide sequence ID" value="NZ_CP169744.1"/>
</dbReference>
<dbReference type="SMR" id="Q88MZ4"/>
<dbReference type="STRING" id="160488.PP_1424"/>
<dbReference type="PaxDb" id="160488-PP_1424"/>
<dbReference type="KEGG" id="ppu:PP_1424"/>
<dbReference type="PATRIC" id="fig|160488.4.peg.1510"/>
<dbReference type="eggNOG" id="COG2938">
    <property type="taxonomic scope" value="Bacteria"/>
</dbReference>
<dbReference type="HOGENOM" id="CLU_103054_2_2_6"/>
<dbReference type="OrthoDB" id="9180899at2"/>
<dbReference type="PhylomeDB" id="Q88MZ4"/>
<dbReference type="BioCyc" id="PPUT160488:G1G01-1516-MONOMER"/>
<dbReference type="Proteomes" id="UP000000556">
    <property type="component" value="Chromosome"/>
</dbReference>
<dbReference type="GO" id="GO:0005737">
    <property type="term" value="C:cytoplasm"/>
    <property type="evidence" value="ECO:0007669"/>
    <property type="project" value="UniProtKB-SubCell"/>
</dbReference>
<dbReference type="GO" id="GO:0006105">
    <property type="term" value="P:succinate metabolic process"/>
    <property type="evidence" value="ECO:0007669"/>
    <property type="project" value="TreeGrafter"/>
</dbReference>
<dbReference type="Gene3D" id="1.10.150.250">
    <property type="entry name" value="Flavinator of succinate dehydrogenase"/>
    <property type="match status" value="1"/>
</dbReference>
<dbReference type="InterPro" id="IPR005631">
    <property type="entry name" value="SDH"/>
</dbReference>
<dbReference type="InterPro" id="IPR036714">
    <property type="entry name" value="SDH_sf"/>
</dbReference>
<dbReference type="InterPro" id="IPR050531">
    <property type="entry name" value="SdhE_FAD_assembly_factor"/>
</dbReference>
<dbReference type="PANTHER" id="PTHR39585">
    <property type="entry name" value="FAD ASSEMBLY FACTOR SDHE"/>
    <property type="match status" value="1"/>
</dbReference>
<dbReference type="PANTHER" id="PTHR39585:SF1">
    <property type="entry name" value="FAD ASSEMBLY FACTOR SDHE"/>
    <property type="match status" value="1"/>
</dbReference>
<dbReference type="Pfam" id="PF03937">
    <property type="entry name" value="Sdh5"/>
    <property type="match status" value="1"/>
</dbReference>
<dbReference type="SUPFAM" id="SSF109910">
    <property type="entry name" value="YgfY-like"/>
    <property type="match status" value="1"/>
</dbReference>